<proteinExistence type="inferred from homology"/>
<reference key="1">
    <citation type="journal article" date="2003" name="Nucleic Acids Res.">
        <title>The complete genome sequence and analysis of Corynebacterium diphtheriae NCTC13129.</title>
        <authorList>
            <person name="Cerdeno-Tarraga A.-M."/>
            <person name="Efstratiou A."/>
            <person name="Dover L.G."/>
            <person name="Holden M.T.G."/>
            <person name="Pallen M.J."/>
            <person name="Bentley S.D."/>
            <person name="Besra G.S."/>
            <person name="Churcher C.M."/>
            <person name="James K.D."/>
            <person name="De Zoysa A."/>
            <person name="Chillingworth T."/>
            <person name="Cronin A."/>
            <person name="Dowd L."/>
            <person name="Feltwell T."/>
            <person name="Hamlin N."/>
            <person name="Holroyd S."/>
            <person name="Jagels K."/>
            <person name="Moule S."/>
            <person name="Quail M.A."/>
            <person name="Rabbinowitsch E."/>
            <person name="Rutherford K.M."/>
            <person name="Thomson N.R."/>
            <person name="Unwin L."/>
            <person name="Whitehead S."/>
            <person name="Barrell B.G."/>
            <person name="Parkhill J."/>
        </authorList>
    </citation>
    <scope>NUCLEOTIDE SEQUENCE [LARGE SCALE GENOMIC DNA]</scope>
    <source>
        <strain>ATCC 700971 / NCTC 13129 / Biotype gravis</strain>
    </source>
</reference>
<keyword id="KW-1185">Reference proteome</keyword>
<keyword id="KW-0687">Ribonucleoprotein</keyword>
<keyword id="KW-0689">Ribosomal protein</keyword>
<keyword id="KW-0694">RNA-binding</keyword>
<keyword id="KW-0699">rRNA-binding</keyword>
<organism>
    <name type="scientific">Corynebacterium diphtheriae (strain ATCC 700971 / NCTC 13129 / Biotype gravis)</name>
    <dbReference type="NCBI Taxonomy" id="257309"/>
    <lineage>
        <taxon>Bacteria</taxon>
        <taxon>Bacillati</taxon>
        <taxon>Actinomycetota</taxon>
        <taxon>Actinomycetes</taxon>
        <taxon>Mycobacteriales</taxon>
        <taxon>Corynebacteriaceae</taxon>
        <taxon>Corynebacterium</taxon>
    </lineage>
</organism>
<accession>Q6NJD2</accession>
<protein>
    <recommendedName>
        <fullName evidence="1">Large ribosomal subunit protein uL23</fullName>
    </recommendedName>
    <alternativeName>
        <fullName evidence="2">50S ribosomal protein L23</fullName>
    </alternativeName>
</protein>
<sequence>MAKIADPRDIILAPVVSEKSYGLMEQNTYAFFVAPTANKTEIKIAIEQIFGVKVDSVNTANRAGKRKRSRTGYGVRKATKRAYVTLREGSDAIDIFGGNAA</sequence>
<feature type="chain" id="PRO_1000068069" description="Large ribosomal subunit protein uL23">
    <location>
        <begin position="1"/>
        <end position="101"/>
    </location>
</feature>
<gene>
    <name evidence="1" type="primary">rplW</name>
    <name type="ordered locus">DIP0475</name>
</gene>
<comment type="function">
    <text evidence="1">One of the early assembly proteins it binds 23S rRNA. One of the proteins that surrounds the polypeptide exit tunnel on the outside of the ribosome. Forms the main docking site for trigger factor binding to the ribosome.</text>
</comment>
<comment type="subunit">
    <text evidence="1">Part of the 50S ribosomal subunit. Contacts protein L29, and trigger factor when it is bound to the ribosome.</text>
</comment>
<comment type="similarity">
    <text evidence="1">Belongs to the universal ribosomal protein uL23 family.</text>
</comment>
<dbReference type="EMBL" id="BX248355">
    <property type="protein sequence ID" value="CAE48979.1"/>
    <property type="molecule type" value="Genomic_DNA"/>
</dbReference>
<dbReference type="RefSeq" id="WP_004566725.1">
    <property type="nucleotide sequence ID" value="NC_002935.2"/>
</dbReference>
<dbReference type="SMR" id="Q6NJD2"/>
<dbReference type="STRING" id="257309.DIP0475"/>
<dbReference type="GeneID" id="97331078"/>
<dbReference type="KEGG" id="cdi:DIP0475"/>
<dbReference type="HOGENOM" id="CLU_037562_3_2_11"/>
<dbReference type="Proteomes" id="UP000002198">
    <property type="component" value="Chromosome"/>
</dbReference>
<dbReference type="GO" id="GO:1990904">
    <property type="term" value="C:ribonucleoprotein complex"/>
    <property type="evidence" value="ECO:0007669"/>
    <property type="project" value="UniProtKB-KW"/>
</dbReference>
<dbReference type="GO" id="GO:0005840">
    <property type="term" value="C:ribosome"/>
    <property type="evidence" value="ECO:0007669"/>
    <property type="project" value="UniProtKB-KW"/>
</dbReference>
<dbReference type="GO" id="GO:0019843">
    <property type="term" value="F:rRNA binding"/>
    <property type="evidence" value="ECO:0007669"/>
    <property type="project" value="UniProtKB-UniRule"/>
</dbReference>
<dbReference type="GO" id="GO:0003735">
    <property type="term" value="F:structural constituent of ribosome"/>
    <property type="evidence" value="ECO:0007669"/>
    <property type="project" value="InterPro"/>
</dbReference>
<dbReference type="GO" id="GO:0006412">
    <property type="term" value="P:translation"/>
    <property type="evidence" value="ECO:0007669"/>
    <property type="project" value="UniProtKB-UniRule"/>
</dbReference>
<dbReference type="FunFam" id="3.30.70.330:FF:000001">
    <property type="entry name" value="50S ribosomal protein L23"/>
    <property type="match status" value="1"/>
</dbReference>
<dbReference type="Gene3D" id="3.30.70.330">
    <property type="match status" value="1"/>
</dbReference>
<dbReference type="HAMAP" id="MF_01369_B">
    <property type="entry name" value="Ribosomal_uL23_B"/>
    <property type="match status" value="1"/>
</dbReference>
<dbReference type="InterPro" id="IPR012677">
    <property type="entry name" value="Nucleotide-bd_a/b_plait_sf"/>
</dbReference>
<dbReference type="InterPro" id="IPR013025">
    <property type="entry name" value="Ribosomal_uL23-like"/>
</dbReference>
<dbReference type="InterPro" id="IPR012678">
    <property type="entry name" value="Ribosomal_uL23/eL15/eS24_sf"/>
</dbReference>
<dbReference type="NCBIfam" id="NF004363">
    <property type="entry name" value="PRK05738.2-4"/>
    <property type="match status" value="1"/>
</dbReference>
<dbReference type="NCBIfam" id="NF004364">
    <property type="entry name" value="PRK05738.2-5"/>
    <property type="match status" value="1"/>
</dbReference>
<dbReference type="PANTHER" id="PTHR11620">
    <property type="entry name" value="60S RIBOSOMAL PROTEIN L23A"/>
    <property type="match status" value="1"/>
</dbReference>
<dbReference type="Pfam" id="PF00276">
    <property type="entry name" value="Ribosomal_L23"/>
    <property type="match status" value="1"/>
</dbReference>
<dbReference type="SUPFAM" id="SSF54189">
    <property type="entry name" value="Ribosomal proteins S24e, L23 and L15e"/>
    <property type="match status" value="1"/>
</dbReference>
<name>RL23_CORDI</name>
<evidence type="ECO:0000255" key="1">
    <source>
        <dbReference type="HAMAP-Rule" id="MF_01369"/>
    </source>
</evidence>
<evidence type="ECO:0000305" key="2"/>